<reference key="1">
    <citation type="journal article" date="2004" name="Proc. Natl. Acad. Sci. U.S.A.">
        <title>Complete genomes of two clinical Staphylococcus aureus strains: evidence for the rapid evolution of virulence and drug resistance.</title>
        <authorList>
            <person name="Holden M.T.G."/>
            <person name="Feil E.J."/>
            <person name="Lindsay J.A."/>
            <person name="Peacock S.J."/>
            <person name="Day N.P.J."/>
            <person name="Enright M.C."/>
            <person name="Foster T.J."/>
            <person name="Moore C.E."/>
            <person name="Hurst L."/>
            <person name="Atkin R."/>
            <person name="Barron A."/>
            <person name="Bason N."/>
            <person name="Bentley S.D."/>
            <person name="Chillingworth C."/>
            <person name="Chillingworth T."/>
            <person name="Churcher C."/>
            <person name="Clark L."/>
            <person name="Corton C."/>
            <person name="Cronin A."/>
            <person name="Doggett J."/>
            <person name="Dowd L."/>
            <person name="Feltwell T."/>
            <person name="Hance Z."/>
            <person name="Harris B."/>
            <person name="Hauser H."/>
            <person name="Holroyd S."/>
            <person name="Jagels K."/>
            <person name="James K.D."/>
            <person name="Lennard N."/>
            <person name="Line A."/>
            <person name="Mayes R."/>
            <person name="Moule S."/>
            <person name="Mungall K."/>
            <person name="Ormond D."/>
            <person name="Quail M.A."/>
            <person name="Rabbinowitsch E."/>
            <person name="Rutherford K.M."/>
            <person name="Sanders M."/>
            <person name="Sharp S."/>
            <person name="Simmonds M."/>
            <person name="Stevens K."/>
            <person name="Whitehead S."/>
            <person name="Barrell B.G."/>
            <person name="Spratt B.G."/>
            <person name="Parkhill J."/>
        </authorList>
    </citation>
    <scope>NUCLEOTIDE SEQUENCE [LARGE SCALE GENOMIC DNA]</scope>
    <source>
        <strain>MRSA252</strain>
    </source>
</reference>
<name>AHPF_STAAR</name>
<proteinExistence type="inferred from homology"/>
<dbReference type="EC" id="1.8.1.-"/>
<dbReference type="EMBL" id="BX571856">
    <property type="protein sequence ID" value="CAG39421.1"/>
    <property type="molecule type" value="Genomic_DNA"/>
</dbReference>
<dbReference type="RefSeq" id="WP_000930503.1">
    <property type="nucleotide sequence ID" value="NC_002952.2"/>
</dbReference>
<dbReference type="SMR" id="Q6GJR8"/>
<dbReference type="KEGG" id="sar:SAR0398"/>
<dbReference type="HOGENOM" id="CLU_031864_4_2_9"/>
<dbReference type="Proteomes" id="UP000000596">
    <property type="component" value="Chromosome"/>
</dbReference>
<dbReference type="GO" id="GO:0050660">
    <property type="term" value="F:flavin adenine dinucleotide binding"/>
    <property type="evidence" value="ECO:0007669"/>
    <property type="project" value="InterPro"/>
</dbReference>
<dbReference type="GO" id="GO:0051287">
    <property type="term" value="F:NAD binding"/>
    <property type="evidence" value="ECO:0007669"/>
    <property type="project" value="InterPro"/>
</dbReference>
<dbReference type="GO" id="GO:0102039">
    <property type="term" value="F:NADH-dependent peroxiredoxin activity"/>
    <property type="evidence" value="ECO:0007669"/>
    <property type="project" value="InterPro"/>
</dbReference>
<dbReference type="GO" id="GO:0016668">
    <property type="term" value="F:oxidoreductase activity, acting on a sulfur group of donors, NAD(P) as acceptor"/>
    <property type="evidence" value="ECO:0007669"/>
    <property type="project" value="UniProtKB-ARBA"/>
</dbReference>
<dbReference type="GO" id="GO:0000302">
    <property type="term" value="P:response to reactive oxygen species"/>
    <property type="evidence" value="ECO:0007669"/>
    <property type="project" value="InterPro"/>
</dbReference>
<dbReference type="CDD" id="cd03026">
    <property type="entry name" value="AhpF_NTD_C"/>
    <property type="match status" value="1"/>
</dbReference>
<dbReference type="CDD" id="cd02974">
    <property type="entry name" value="AhpF_NTD_N"/>
    <property type="match status" value="1"/>
</dbReference>
<dbReference type="FunFam" id="3.50.50.60:FF:000007">
    <property type="entry name" value="Alkyl hydroperoxide reductase, F subunit"/>
    <property type="match status" value="1"/>
</dbReference>
<dbReference type="Gene3D" id="3.40.30.80">
    <property type="match status" value="1"/>
</dbReference>
<dbReference type="Gene3D" id="3.50.50.60">
    <property type="entry name" value="FAD/NAD(P)-binding domain"/>
    <property type="match status" value="2"/>
</dbReference>
<dbReference type="InterPro" id="IPR044141">
    <property type="entry name" value="AhpF_NTD_C"/>
</dbReference>
<dbReference type="InterPro" id="IPR044142">
    <property type="entry name" value="AhpF_NTD_N"/>
</dbReference>
<dbReference type="InterPro" id="IPR012081">
    <property type="entry name" value="Alkyl_hydroperoxide_Rdtase_suF"/>
</dbReference>
<dbReference type="InterPro" id="IPR036188">
    <property type="entry name" value="FAD/NAD-bd_sf"/>
</dbReference>
<dbReference type="InterPro" id="IPR023753">
    <property type="entry name" value="FAD/NAD-binding_dom"/>
</dbReference>
<dbReference type="InterPro" id="IPR050097">
    <property type="entry name" value="Ferredoxin-NADP_redctase_2"/>
</dbReference>
<dbReference type="InterPro" id="IPR008255">
    <property type="entry name" value="Pyr_nucl-diS_OxRdtase_2_AS"/>
</dbReference>
<dbReference type="InterPro" id="IPR012336">
    <property type="entry name" value="Thioredoxin-like_fold"/>
</dbReference>
<dbReference type="InterPro" id="IPR036249">
    <property type="entry name" value="Thioredoxin-like_sf"/>
</dbReference>
<dbReference type="NCBIfam" id="TIGR03140">
    <property type="entry name" value="AhpF"/>
    <property type="match status" value="1"/>
</dbReference>
<dbReference type="PANTHER" id="PTHR48105">
    <property type="entry name" value="THIOREDOXIN REDUCTASE 1-RELATED-RELATED"/>
    <property type="match status" value="1"/>
</dbReference>
<dbReference type="Pfam" id="PF07992">
    <property type="entry name" value="Pyr_redox_2"/>
    <property type="match status" value="1"/>
</dbReference>
<dbReference type="Pfam" id="PF13192">
    <property type="entry name" value="Thioredoxin_3"/>
    <property type="match status" value="1"/>
</dbReference>
<dbReference type="PIRSF" id="PIRSF000238">
    <property type="entry name" value="AhpF"/>
    <property type="match status" value="1"/>
</dbReference>
<dbReference type="PRINTS" id="PR00368">
    <property type="entry name" value="FADPNR"/>
</dbReference>
<dbReference type="PRINTS" id="PR00469">
    <property type="entry name" value="PNDRDTASEII"/>
</dbReference>
<dbReference type="SUPFAM" id="SSF51905">
    <property type="entry name" value="FAD/NAD(P)-binding domain"/>
    <property type="match status" value="1"/>
</dbReference>
<dbReference type="SUPFAM" id="SSF52833">
    <property type="entry name" value="Thioredoxin-like"/>
    <property type="match status" value="2"/>
</dbReference>
<dbReference type="PROSITE" id="PS51354">
    <property type="entry name" value="GLUTAREDOXIN_2"/>
    <property type="match status" value="1"/>
</dbReference>
<dbReference type="PROSITE" id="PS00573">
    <property type="entry name" value="PYRIDINE_REDOX_2"/>
    <property type="match status" value="1"/>
</dbReference>
<sequence length="507" mass="54693">MLNADLKQQLKQLLELMEGNVEFVASLGSDDKSKELKELLTEISDMSPRLSLSEKSLKRTPSFSVNRPGEETGVTFAGIPLGHEFNSLVLAILQVSGRAPKEKQSIIDQIKNLEGSFHFETFISLTCQKCPDVVQALNLMSVINPNITHSMIDGAVFREESENIMAVPAVFLNGEEFGNGRMTIQDILSKLGSTADASEFENKEPYDVLIVGGGPASGSAAIYTARKGLRTGIVADRIGGQVNDTAGIENFITVKETTGSEFSSNLAAHIDQYDIDAMTGIRATDIEKTDEAIKVTLENGAVLESKTVIIATGAGWRKLNIPGEEQLINKGVAFCPHCDGPLFENKDVAVIGGGNSGVEAAIDLAGIVNHVTLFEFASELKADNVLQDRLRSLSNVDIKTNAKTTEVVGENHVTGIRYEDMSTGEEHLLNLDGIFVQIGLLPNTSWLKDAVELNERGEIVIDRNNNTNVPGIFAAGDVTDQKNKQIIISMGAGANAALNAFDYIIRN</sequence>
<organism>
    <name type="scientific">Staphylococcus aureus (strain MRSA252)</name>
    <dbReference type="NCBI Taxonomy" id="282458"/>
    <lineage>
        <taxon>Bacteria</taxon>
        <taxon>Bacillati</taxon>
        <taxon>Bacillota</taxon>
        <taxon>Bacilli</taxon>
        <taxon>Bacillales</taxon>
        <taxon>Staphylococcaceae</taxon>
        <taxon>Staphylococcus</taxon>
    </lineage>
</organism>
<protein>
    <recommendedName>
        <fullName>Alkyl hydroperoxide reductase subunit F</fullName>
        <ecNumber>1.8.1.-</ecNumber>
    </recommendedName>
</protein>
<feature type="chain" id="PRO_0000166781" description="Alkyl hydroperoxide reductase subunit F">
    <location>
        <begin position="1"/>
        <end position="507"/>
    </location>
</feature>
<feature type="binding site" evidence="1">
    <location>
        <begin position="207"/>
        <end position="222"/>
    </location>
    <ligand>
        <name>FAD</name>
        <dbReference type="ChEBI" id="CHEBI:57692"/>
    </ligand>
</feature>
<feature type="binding site" evidence="1">
    <location>
        <begin position="347"/>
        <end position="361"/>
    </location>
    <ligand>
        <name>NAD(+)</name>
        <dbReference type="ChEBI" id="CHEBI:57540"/>
    </ligand>
</feature>
<feature type="binding site" evidence="1">
    <location>
        <begin position="467"/>
        <end position="477"/>
    </location>
    <ligand>
        <name>FAD</name>
        <dbReference type="ChEBI" id="CHEBI:57692"/>
    </ligand>
</feature>
<feature type="disulfide bond" description="Redox-active" evidence="1">
    <location>
        <begin position="335"/>
        <end position="338"/>
    </location>
</feature>
<keyword id="KW-1015">Disulfide bond</keyword>
<keyword id="KW-0274">FAD</keyword>
<keyword id="KW-0285">Flavoprotein</keyword>
<keyword id="KW-0520">NAD</keyword>
<keyword id="KW-0521">NADP</keyword>
<keyword id="KW-0560">Oxidoreductase</keyword>
<keyword id="KW-0676">Redox-active center</keyword>
<evidence type="ECO:0000250" key="1"/>
<evidence type="ECO:0000305" key="2"/>
<comment type="function">
    <text evidence="1">Serves to protect the cell against DNA damage by alkyl hydroperoxides. It can use either NADH or NADPH as electron donor for direct reduction of redox dyes or of alkyl hydroperoxides when combined with the AhpC protein (By similarity).</text>
</comment>
<comment type="cofactor">
    <cofactor evidence="1">
        <name>FAD</name>
        <dbReference type="ChEBI" id="CHEBI:57692"/>
    </cofactor>
    <text evidence="1">Binds 1 FAD per subunit.</text>
</comment>
<comment type="subunit">
    <text evidence="1">Homodimer.</text>
</comment>
<comment type="miscellaneous">
    <text>The active site is a redox-active disulfide bond.</text>
</comment>
<comment type="similarity">
    <text evidence="2">Belongs to the class-II pyridine nucleotide-disulfide oxidoreductase family.</text>
</comment>
<gene>
    <name type="primary">ahpF</name>
    <name type="ordered locus">SAR0398</name>
</gene>
<accession>Q6GJR8</accession>